<evidence type="ECO:0000250" key="1"/>
<evidence type="ECO:0000255" key="2"/>
<evidence type="ECO:0000255" key="3">
    <source>
        <dbReference type="PROSITE-ProRule" id="PRU10035"/>
    </source>
</evidence>
<evidence type="ECO:0000255" key="4">
    <source>
        <dbReference type="PROSITE-ProRule" id="PRU10036"/>
    </source>
</evidence>
<evidence type="ECO:0000305" key="5"/>
<protein>
    <recommendedName>
        <fullName>Acidic phospholipase A2 S7-48J</fullName>
        <shortName>svPLA2</shortName>
        <ecNumber>3.1.1.4</ecNumber>
    </recommendedName>
    <alternativeName>
        <fullName>ASPLA4</fullName>
    </alternativeName>
    <alternativeName>
        <fullName>Phosphatidylcholine 2-acylhydrolase</fullName>
    </alternativeName>
</protein>
<organism>
    <name type="scientific">Austrelaps superbus</name>
    <name type="common">Lowland copperhead snake</name>
    <name type="synonym">Hoplocephalus superbus</name>
    <dbReference type="NCBI Taxonomy" id="29156"/>
    <lineage>
        <taxon>Eukaryota</taxon>
        <taxon>Metazoa</taxon>
        <taxon>Chordata</taxon>
        <taxon>Craniata</taxon>
        <taxon>Vertebrata</taxon>
        <taxon>Euteleostomi</taxon>
        <taxon>Lepidosauria</taxon>
        <taxon>Squamata</taxon>
        <taxon>Bifurcata</taxon>
        <taxon>Unidentata</taxon>
        <taxon>Episquamata</taxon>
        <taxon>Toxicofera</taxon>
        <taxon>Serpentes</taxon>
        <taxon>Colubroidea</taxon>
        <taxon>Elapidae</taxon>
        <taxon>Hydrophiinae</taxon>
        <taxon>Austrelaps</taxon>
    </lineage>
</organism>
<name>PA2A4_AUSSU</name>
<accession>Q9PUI0</accession>
<comment type="function">
    <text evidence="1">Snake venom phospholipase A2 (PLA2) that inhibits collagen-induced platelet aggregation. PLA2 catalyzes the calcium-dependent hydrolysis of the 2-acyl groups in 3-sn-phosphoglycerides (By similarity).</text>
</comment>
<comment type="catalytic activity">
    <reaction evidence="3 4">
        <text>a 1,2-diacyl-sn-glycero-3-phosphocholine + H2O = a 1-acyl-sn-glycero-3-phosphocholine + a fatty acid + H(+)</text>
        <dbReference type="Rhea" id="RHEA:15801"/>
        <dbReference type="ChEBI" id="CHEBI:15377"/>
        <dbReference type="ChEBI" id="CHEBI:15378"/>
        <dbReference type="ChEBI" id="CHEBI:28868"/>
        <dbReference type="ChEBI" id="CHEBI:57643"/>
        <dbReference type="ChEBI" id="CHEBI:58168"/>
        <dbReference type="EC" id="3.1.1.4"/>
    </reaction>
</comment>
<comment type="cofactor">
    <cofactor evidence="1">
        <name>Ca(2+)</name>
        <dbReference type="ChEBI" id="CHEBI:29108"/>
    </cofactor>
    <text evidence="1">Binds 1 Ca(2+) ion.</text>
</comment>
<comment type="subcellular location">
    <subcellularLocation>
        <location evidence="1">Secreted</location>
    </subcellularLocation>
</comment>
<comment type="tissue specificity">
    <text>Expressed by the venom gland.</text>
</comment>
<comment type="similarity">
    <text evidence="5">Belongs to the phospholipase A2 family. Group I subfamily. D49 sub-subfamily.</text>
</comment>
<keyword id="KW-0106">Calcium</keyword>
<keyword id="KW-1015">Disulfide bond</keyword>
<keyword id="KW-1199">Hemostasis impairing toxin</keyword>
<keyword id="KW-0378">Hydrolase</keyword>
<keyword id="KW-0442">Lipid degradation</keyword>
<keyword id="KW-0443">Lipid metabolism</keyword>
<keyword id="KW-0479">Metal-binding</keyword>
<keyword id="KW-1201">Platelet aggregation inhibiting toxin</keyword>
<keyword id="KW-0964">Secreted</keyword>
<keyword id="KW-0732">Signal</keyword>
<keyword id="KW-0800">Toxin</keyword>
<reference key="1">
    <citation type="journal article" date="2000" name="Arch. Biochem. Biophys.">
        <title>Phospholipase A(2) with platelet aggregation inhibitor activity from Austrelaps superbus venom: protein purification and cDNA cloning.</title>
        <authorList>
            <person name="Singh S.B."/>
            <person name="Armugam A."/>
            <person name="Kini R.M."/>
            <person name="Jeyaseelan K."/>
        </authorList>
    </citation>
    <scope>NUCLEOTIDE SEQUENCE [MRNA]</scope>
    <source>
        <tissue>Venom gland</tissue>
    </source>
</reference>
<feature type="signal peptide" evidence="2">
    <location>
        <begin position="1"/>
        <end position="19"/>
    </location>
</feature>
<feature type="propeptide" id="PRO_0000022791" evidence="2">
    <location>
        <begin position="20"/>
        <end position="27"/>
    </location>
</feature>
<feature type="chain" id="PRO_0000022792" description="Acidic phospholipase A2 S7-48J">
    <location>
        <begin position="28"/>
        <end position="147"/>
    </location>
</feature>
<feature type="active site" evidence="1">
    <location>
        <position position="75"/>
    </location>
</feature>
<feature type="active site" evidence="1">
    <location>
        <position position="121"/>
    </location>
</feature>
<feature type="binding site" evidence="1">
    <location>
        <position position="55"/>
    </location>
    <ligand>
        <name>Ca(2+)</name>
        <dbReference type="ChEBI" id="CHEBI:29108"/>
    </ligand>
</feature>
<feature type="binding site" evidence="1">
    <location>
        <position position="57"/>
    </location>
    <ligand>
        <name>Ca(2+)</name>
        <dbReference type="ChEBI" id="CHEBI:29108"/>
    </ligand>
</feature>
<feature type="binding site" evidence="1">
    <location>
        <position position="59"/>
    </location>
    <ligand>
        <name>Ca(2+)</name>
        <dbReference type="ChEBI" id="CHEBI:29108"/>
    </ligand>
</feature>
<feature type="binding site" evidence="1">
    <location>
        <position position="76"/>
    </location>
    <ligand>
        <name>Ca(2+)</name>
        <dbReference type="ChEBI" id="CHEBI:29108"/>
    </ligand>
</feature>
<feature type="disulfide bond" evidence="1">
    <location>
        <begin position="38"/>
        <end position="99"/>
    </location>
</feature>
<feature type="disulfide bond" evidence="1">
    <location>
        <begin position="54"/>
        <end position="146"/>
    </location>
</feature>
<feature type="disulfide bond" evidence="1">
    <location>
        <begin position="56"/>
        <end position="72"/>
    </location>
</feature>
<feature type="disulfide bond" evidence="1">
    <location>
        <begin position="71"/>
        <end position="127"/>
    </location>
</feature>
<feature type="disulfide bond" evidence="1">
    <location>
        <begin position="78"/>
        <end position="120"/>
    </location>
</feature>
<feature type="disulfide bond" evidence="1">
    <location>
        <begin position="88"/>
        <end position="113"/>
    </location>
</feature>
<feature type="disulfide bond" evidence="1">
    <location>
        <begin position="106"/>
        <end position="118"/>
    </location>
</feature>
<sequence length="147" mass="16384">MYPAHLLVLLAVCVSLLGASDIPPQPLNLYQFSNMIQCANHGRRPTKHYMDYGCYCGKGGSGTPVDELDRCCKIHDDCYGEAEKSQNCAPYWTWYTWKCGSDGPQCDDSETGCQRSVCECDAIAAKCFAKAPYNDANWDIDTETRCQ</sequence>
<dbReference type="EC" id="3.1.1.4"/>
<dbReference type="EMBL" id="AF184130">
    <property type="protein sequence ID" value="AAD56553.1"/>
    <property type="molecule type" value="mRNA"/>
</dbReference>
<dbReference type="SMR" id="Q9PUI0"/>
<dbReference type="GO" id="GO:0005576">
    <property type="term" value="C:extracellular region"/>
    <property type="evidence" value="ECO:0007669"/>
    <property type="project" value="UniProtKB-SubCell"/>
</dbReference>
<dbReference type="GO" id="GO:0005509">
    <property type="term" value="F:calcium ion binding"/>
    <property type="evidence" value="ECO:0007669"/>
    <property type="project" value="InterPro"/>
</dbReference>
<dbReference type="GO" id="GO:0047498">
    <property type="term" value="F:calcium-dependent phospholipase A2 activity"/>
    <property type="evidence" value="ECO:0007669"/>
    <property type="project" value="TreeGrafter"/>
</dbReference>
<dbReference type="GO" id="GO:0005543">
    <property type="term" value="F:phospholipid binding"/>
    <property type="evidence" value="ECO:0007669"/>
    <property type="project" value="TreeGrafter"/>
</dbReference>
<dbReference type="GO" id="GO:0090729">
    <property type="term" value="F:toxin activity"/>
    <property type="evidence" value="ECO:0007669"/>
    <property type="project" value="UniProtKB-KW"/>
</dbReference>
<dbReference type="GO" id="GO:0050482">
    <property type="term" value="P:arachidonate secretion"/>
    <property type="evidence" value="ECO:0007669"/>
    <property type="project" value="InterPro"/>
</dbReference>
<dbReference type="GO" id="GO:0016042">
    <property type="term" value="P:lipid catabolic process"/>
    <property type="evidence" value="ECO:0007669"/>
    <property type="project" value="UniProtKB-KW"/>
</dbReference>
<dbReference type="GO" id="GO:0006644">
    <property type="term" value="P:phospholipid metabolic process"/>
    <property type="evidence" value="ECO:0007669"/>
    <property type="project" value="InterPro"/>
</dbReference>
<dbReference type="CDD" id="cd00125">
    <property type="entry name" value="PLA2c"/>
    <property type="match status" value="1"/>
</dbReference>
<dbReference type="FunFam" id="1.20.90.10:FF:000007">
    <property type="entry name" value="Acidic phospholipase A2"/>
    <property type="match status" value="1"/>
</dbReference>
<dbReference type="Gene3D" id="1.20.90.10">
    <property type="entry name" value="Phospholipase A2 domain"/>
    <property type="match status" value="1"/>
</dbReference>
<dbReference type="InterPro" id="IPR001211">
    <property type="entry name" value="PLipase_A2"/>
</dbReference>
<dbReference type="InterPro" id="IPR033112">
    <property type="entry name" value="PLipase_A2_Asp_AS"/>
</dbReference>
<dbReference type="InterPro" id="IPR016090">
    <property type="entry name" value="PLipase_A2_dom"/>
</dbReference>
<dbReference type="InterPro" id="IPR036444">
    <property type="entry name" value="PLipase_A2_dom_sf"/>
</dbReference>
<dbReference type="InterPro" id="IPR033113">
    <property type="entry name" value="PLipase_A2_His_AS"/>
</dbReference>
<dbReference type="PANTHER" id="PTHR11716:SF51">
    <property type="entry name" value="PHOSPHOLIPASE A2"/>
    <property type="match status" value="1"/>
</dbReference>
<dbReference type="PANTHER" id="PTHR11716">
    <property type="entry name" value="PHOSPHOLIPASE A2 FAMILY MEMBER"/>
    <property type="match status" value="1"/>
</dbReference>
<dbReference type="Pfam" id="PF00068">
    <property type="entry name" value="Phospholip_A2_1"/>
    <property type="match status" value="1"/>
</dbReference>
<dbReference type="PRINTS" id="PR00389">
    <property type="entry name" value="PHPHLIPASEA2"/>
</dbReference>
<dbReference type="SMART" id="SM00085">
    <property type="entry name" value="PA2c"/>
    <property type="match status" value="1"/>
</dbReference>
<dbReference type="SUPFAM" id="SSF48619">
    <property type="entry name" value="Phospholipase A2, PLA2"/>
    <property type="match status" value="1"/>
</dbReference>
<dbReference type="PROSITE" id="PS00119">
    <property type="entry name" value="PA2_ASP"/>
    <property type="match status" value="1"/>
</dbReference>
<dbReference type="PROSITE" id="PS00118">
    <property type="entry name" value="PA2_HIS"/>
    <property type="match status" value="1"/>
</dbReference>
<proteinExistence type="evidence at transcript level"/>